<comment type="function">
    <text evidence="1">Condensation of UDP-2,3-diacylglucosamine and 2,3-diacylglucosamine-1-phosphate to form lipid A disaccharide, a precursor of lipid A, a phosphorylated glycolipid that anchors the lipopolysaccharide to the outer membrane of the cell.</text>
</comment>
<comment type="catalytic activity">
    <reaction evidence="1">
        <text>a lipid X + a UDP-2-N,3-O-bis[(3R)-3-hydroxyacyl]-alpha-D-glucosamine = a lipid A disaccharide + UDP + H(+)</text>
        <dbReference type="Rhea" id="RHEA:67828"/>
        <dbReference type="ChEBI" id="CHEBI:15378"/>
        <dbReference type="ChEBI" id="CHEBI:58223"/>
        <dbReference type="ChEBI" id="CHEBI:137748"/>
        <dbReference type="ChEBI" id="CHEBI:176338"/>
        <dbReference type="ChEBI" id="CHEBI:176343"/>
        <dbReference type="EC" id="2.4.1.182"/>
    </reaction>
</comment>
<comment type="pathway">
    <text evidence="1">Bacterial outer membrane biogenesis; LPS lipid A biosynthesis.</text>
</comment>
<comment type="similarity">
    <text evidence="1">Belongs to the LpxB family.</text>
</comment>
<comment type="sequence caution" evidence="2">
    <conflict type="erroneous initiation">
        <sequence resource="EMBL-CDS" id="AAY49926"/>
    </conflict>
</comment>
<name>LPXB_XANC8</name>
<protein>
    <recommendedName>
        <fullName evidence="1">Lipid-A-disaccharide synthase</fullName>
        <ecNumber evidence="1">2.4.1.182</ecNumber>
    </recommendedName>
</protein>
<reference key="1">
    <citation type="journal article" date="2005" name="Genome Res.">
        <title>Comparative and functional genomic analyses of the pathogenicity of phytopathogen Xanthomonas campestris pv. campestris.</title>
        <authorList>
            <person name="Qian W."/>
            <person name="Jia Y."/>
            <person name="Ren S.-X."/>
            <person name="He Y.-Q."/>
            <person name="Feng J.-X."/>
            <person name="Lu L.-F."/>
            <person name="Sun Q."/>
            <person name="Ying G."/>
            <person name="Tang D.-J."/>
            <person name="Tang H."/>
            <person name="Wu W."/>
            <person name="Hao P."/>
            <person name="Wang L."/>
            <person name="Jiang B.-L."/>
            <person name="Zeng S."/>
            <person name="Gu W.-Y."/>
            <person name="Lu G."/>
            <person name="Rong L."/>
            <person name="Tian Y."/>
            <person name="Yao Z."/>
            <person name="Fu G."/>
            <person name="Chen B."/>
            <person name="Fang R."/>
            <person name="Qiang B."/>
            <person name="Chen Z."/>
            <person name="Zhao G.-P."/>
            <person name="Tang J.-L."/>
            <person name="He C."/>
        </authorList>
    </citation>
    <scope>NUCLEOTIDE SEQUENCE [LARGE SCALE GENOMIC DNA]</scope>
    <source>
        <strain>8004</strain>
    </source>
</reference>
<proteinExistence type="inferred from homology"/>
<evidence type="ECO:0000255" key="1">
    <source>
        <dbReference type="HAMAP-Rule" id="MF_00392"/>
    </source>
</evidence>
<evidence type="ECO:0000305" key="2"/>
<gene>
    <name evidence="1" type="primary">lpxB</name>
    <name type="ordered locus">XC_2878</name>
</gene>
<organism>
    <name type="scientific">Xanthomonas campestris pv. campestris (strain 8004)</name>
    <dbReference type="NCBI Taxonomy" id="314565"/>
    <lineage>
        <taxon>Bacteria</taxon>
        <taxon>Pseudomonadati</taxon>
        <taxon>Pseudomonadota</taxon>
        <taxon>Gammaproteobacteria</taxon>
        <taxon>Lysobacterales</taxon>
        <taxon>Lysobacteraceae</taxon>
        <taxon>Xanthomonas</taxon>
    </lineage>
</organism>
<feature type="chain" id="PRO_0000255232" description="Lipid-A-disaccharide synthase">
    <location>
        <begin position="1"/>
        <end position="438"/>
    </location>
</feature>
<dbReference type="EC" id="2.4.1.182" evidence="1"/>
<dbReference type="EMBL" id="CP000050">
    <property type="protein sequence ID" value="AAY49926.1"/>
    <property type="status" value="ALT_INIT"/>
    <property type="molecule type" value="Genomic_DNA"/>
</dbReference>
<dbReference type="RefSeq" id="WP_029629001.1">
    <property type="nucleotide sequence ID" value="NZ_CP155948.1"/>
</dbReference>
<dbReference type="SMR" id="Q4USP7"/>
<dbReference type="CAZy" id="GT19">
    <property type="family name" value="Glycosyltransferase Family 19"/>
</dbReference>
<dbReference type="KEGG" id="xcb:XC_2878"/>
<dbReference type="HOGENOM" id="CLU_036577_3_0_6"/>
<dbReference type="UniPathway" id="UPA00973"/>
<dbReference type="Proteomes" id="UP000000420">
    <property type="component" value="Chromosome"/>
</dbReference>
<dbReference type="GO" id="GO:0016020">
    <property type="term" value="C:membrane"/>
    <property type="evidence" value="ECO:0007669"/>
    <property type="project" value="GOC"/>
</dbReference>
<dbReference type="GO" id="GO:0008915">
    <property type="term" value="F:lipid-A-disaccharide synthase activity"/>
    <property type="evidence" value="ECO:0007669"/>
    <property type="project" value="UniProtKB-UniRule"/>
</dbReference>
<dbReference type="GO" id="GO:0005543">
    <property type="term" value="F:phospholipid binding"/>
    <property type="evidence" value="ECO:0007669"/>
    <property type="project" value="TreeGrafter"/>
</dbReference>
<dbReference type="GO" id="GO:0009245">
    <property type="term" value="P:lipid A biosynthetic process"/>
    <property type="evidence" value="ECO:0007669"/>
    <property type="project" value="UniProtKB-UniRule"/>
</dbReference>
<dbReference type="HAMAP" id="MF_00392">
    <property type="entry name" value="LpxB"/>
    <property type="match status" value="1"/>
</dbReference>
<dbReference type="InterPro" id="IPR003835">
    <property type="entry name" value="Glyco_trans_19"/>
</dbReference>
<dbReference type="NCBIfam" id="TIGR00215">
    <property type="entry name" value="lpxB"/>
    <property type="match status" value="1"/>
</dbReference>
<dbReference type="PANTHER" id="PTHR30372">
    <property type="entry name" value="LIPID-A-DISACCHARIDE SYNTHASE"/>
    <property type="match status" value="1"/>
</dbReference>
<dbReference type="PANTHER" id="PTHR30372:SF4">
    <property type="entry name" value="LIPID-A-DISACCHARIDE SYNTHASE, MITOCHONDRIAL-RELATED"/>
    <property type="match status" value="1"/>
</dbReference>
<dbReference type="Pfam" id="PF02684">
    <property type="entry name" value="LpxB"/>
    <property type="match status" value="1"/>
</dbReference>
<dbReference type="SUPFAM" id="SSF53756">
    <property type="entry name" value="UDP-Glycosyltransferase/glycogen phosphorylase"/>
    <property type="match status" value="1"/>
</dbReference>
<sequence length="438" mass="47373">MTGIGNREPEHGAGAHVGAAVSVPDAASIPHSPLPIPGARMRAPRIALIAGEASGDILGAGLIDALRRRYPDAEFVGIGGDAMRSAGCQTWFDASELAVMGLTEVLRHLPRLLKLRSAFRERVLAWKPDVFIGIDAPDFNLPVERWLKQRGVRTVHYVSPSVWAWREKRAEKIGVSADLVLCLFPMEPPIYAKHGVDARFVGHPMADAIAYQADREAARAKLGLSTSSTVLAVLPGSRHGEISRLGDTFFQAAWLVSEHLPNLHVLVPAANPGCKQLLAEQLSRSSLPVMRSHLLDGQARTAMLAADVVLLASGTATLEAMLVKRPMVVGYKVAPLTYRIVKTLGLLKVNRYALPNILANEDLAPELMQDDCTPERLCEALLDWFKHPEKVAGLQSRYLALHAQLRQDASARAAEAVAELLTQRELGIGNRESGGAGS</sequence>
<accession>Q4USP7</accession>
<keyword id="KW-0328">Glycosyltransferase</keyword>
<keyword id="KW-0441">Lipid A biosynthesis</keyword>
<keyword id="KW-0444">Lipid biosynthesis</keyword>
<keyword id="KW-0443">Lipid metabolism</keyword>
<keyword id="KW-0808">Transferase</keyword>